<feature type="chain" id="PRO_0000126574" description="Small ribosomal subunit protein uS8c">
    <location>
        <begin position="1"/>
        <end position="134"/>
    </location>
</feature>
<protein>
    <recommendedName>
        <fullName evidence="2">Small ribosomal subunit protein uS8c</fullName>
    </recommendedName>
    <alternativeName>
        <fullName>30S ribosomal protein S8, chloroplastic</fullName>
    </alternativeName>
</protein>
<dbReference type="EMBL" id="AP002983">
    <property type="protein sequence ID" value="BAB33231.1"/>
    <property type="molecule type" value="Genomic_DNA"/>
</dbReference>
<dbReference type="RefSeq" id="NP_084832.1">
    <property type="nucleotide sequence ID" value="NC_002694.1"/>
</dbReference>
<dbReference type="SMR" id="Q9BBQ1"/>
<dbReference type="GeneID" id="802914"/>
<dbReference type="GO" id="GO:0009507">
    <property type="term" value="C:chloroplast"/>
    <property type="evidence" value="ECO:0007669"/>
    <property type="project" value="UniProtKB-SubCell"/>
</dbReference>
<dbReference type="GO" id="GO:1990904">
    <property type="term" value="C:ribonucleoprotein complex"/>
    <property type="evidence" value="ECO:0007669"/>
    <property type="project" value="UniProtKB-KW"/>
</dbReference>
<dbReference type="GO" id="GO:0005840">
    <property type="term" value="C:ribosome"/>
    <property type="evidence" value="ECO:0007669"/>
    <property type="project" value="UniProtKB-KW"/>
</dbReference>
<dbReference type="GO" id="GO:0019843">
    <property type="term" value="F:rRNA binding"/>
    <property type="evidence" value="ECO:0007669"/>
    <property type="project" value="UniProtKB-UniRule"/>
</dbReference>
<dbReference type="GO" id="GO:0003735">
    <property type="term" value="F:structural constituent of ribosome"/>
    <property type="evidence" value="ECO:0007669"/>
    <property type="project" value="InterPro"/>
</dbReference>
<dbReference type="GO" id="GO:0006412">
    <property type="term" value="P:translation"/>
    <property type="evidence" value="ECO:0007669"/>
    <property type="project" value="UniProtKB-UniRule"/>
</dbReference>
<dbReference type="FunFam" id="3.30.1490.10:FF:000001">
    <property type="entry name" value="30S ribosomal protein S8"/>
    <property type="match status" value="1"/>
</dbReference>
<dbReference type="FunFam" id="3.30.1370.30:FF:000004">
    <property type="entry name" value="30S ribosomal protein S8, chloroplastic"/>
    <property type="match status" value="1"/>
</dbReference>
<dbReference type="Gene3D" id="3.30.1370.30">
    <property type="match status" value="1"/>
</dbReference>
<dbReference type="Gene3D" id="3.30.1490.10">
    <property type="match status" value="1"/>
</dbReference>
<dbReference type="HAMAP" id="MF_01302_B">
    <property type="entry name" value="Ribosomal_uS8_B"/>
    <property type="match status" value="1"/>
</dbReference>
<dbReference type="InterPro" id="IPR000630">
    <property type="entry name" value="Ribosomal_uS8"/>
</dbReference>
<dbReference type="InterPro" id="IPR047863">
    <property type="entry name" value="Ribosomal_uS8_CS"/>
</dbReference>
<dbReference type="InterPro" id="IPR035987">
    <property type="entry name" value="Ribosomal_uS8_sf"/>
</dbReference>
<dbReference type="NCBIfam" id="NF001109">
    <property type="entry name" value="PRK00136.1"/>
    <property type="match status" value="1"/>
</dbReference>
<dbReference type="PANTHER" id="PTHR11758">
    <property type="entry name" value="40S RIBOSOMAL PROTEIN S15A"/>
    <property type="match status" value="1"/>
</dbReference>
<dbReference type="Pfam" id="PF00410">
    <property type="entry name" value="Ribosomal_S8"/>
    <property type="match status" value="1"/>
</dbReference>
<dbReference type="SUPFAM" id="SSF56047">
    <property type="entry name" value="Ribosomal protein S8"/>
    <property type="match status" value="1"/>
</dbReference>
<dbReference type="PROSITE" id="PS00053">
    <property type="entry name" value="RIBOSOMAL_S8"/>
    <property type="match status" value="1"/>
</dbReference>
<proteinExistence type="inferred from homology"/>
<geneLocation type="chloroplast"/>
<accession>Q9BBQ1</accession>
<gene>
    <name type="primary">rps8</name>
</gene>
<comment type="function">
    <text evidence="1">One of the primary rRNA binding proteins, it binds directly to 16S rRNA central domain where it helps coordinate assembly of the platform of the 30S subunit.</text>
</comment>
<comment type="subunit">
    <text evidence="1">Part of the 30S ribosomal subunit.</text>
</comment>
<comment type="subcellular location">
    <subcellularLocation>
        <location>Plastid</location>
        <location>Chloroplast</location>
    </subcellularLocation>
</comment>
<comment type="similarity">
    <text evidence="2">Belongs to the universal ribosomal protein uS8 family.</text>
</comment>
<name>RR8_LOTJA</name>
<sequence length="134" mass="15584">MGKDTIADIITSIRNADMNRKRTVQIPFTNITENTVKILLREGFIENVRKHRESDKSFLVLTLRYRRNTKGSYKTFLNLKRISTPGLRIYYNYQKIPRILGGMGIVILSTSRGIMTDREARLEKIGGEVLCYIW</sequence>
<keyword id="KW-0150">Chloroplast</keyword>
<keyword id="KW-0934">Plastid</keyword>
<keyword id="KW-0687">Ribonucleoprotein</keyword>
<keyword id="KW-0689">Ribosomal protein</keyword>
<keyword id="KW-0694">RNA-binding</keyword>
<keyword id="KW-0699">rRNA-binding</keyword>
<reference key="1">
    <citation type="journal article" date="2000" name="DNA Res.">
        <title>Complete structure of the chloroplast genome of a legume, Lotus japonicus.</title>
        <authorList>
            <person name="Kato T."/>
            <person name="Kaneko T."/>
            <person name="Sato S."/>
            <person name="Nakamura Y."/>
            <person name="Tabata S."/>
        </authorList>
    </citation>
    <scope>NUCLEOTIDE SEQUENCE [LARGE SCALE GENOMIC DNA]</scope>
    <source>
        <strain>cv. Miyakojima MG-20</strain>
    </source>
</reference>
<organism>
    <name type="scientific">Lotus japonicus</name>
    <name type="common">Lotus corniculatus var. japonicus</name>
    <dbReference type="NCBI Taxonomy" id="34305"/>
    <lineage>
        <taxon>Eukaryota</taxon>
        <taxon>Viridiplantae</taxon>
        <taxon>Streptophyta</taxon>
        <taxon>Embryophyta</taxon>
        <taxon>Tracheophyta</taxon>
        <taxon>Spermatophyta</taxon>
        <taxon>Magnoliopsida</taxon>
        <taxon>eudicotyledons</taxon>
        <taxon>Gunneridae</taxon>
        <taxon>Pentapetalae</taxon>
        <taxon>rosids</taxon>
        <taxon>fabids</taxon>
        <taxon>Fabales</taxon>
        <taxon>Fabaceae</taxon>
        <taxon>Papilionoideae</taxon>
        <taxon>50 kb inversion clade</taxon>
        <taxon>NPAAA clade</taxon>
        <taxon>Hologalegina</taxon>
        <taxon>robinioid clade</taxon>
        <taxon>Loteae</taxon>
        <taxon>Lotus</taxon>
    </lineage>
</organism>
<evidence type="ECO:0000250" key="1"/>
<evidence type="ECO:0000305" key="2"/>